<keyword id="KW-0030">Aminoacyl-tRNA synthetase</keyword>
<keyword id="KW-0067">ATP-binding</keyword>
<keyword id="KW-0963">Cytoplasm</keyword>
<keyword id="KW-0436">Ligase</keyword>
<keyword id="KW-0547">Nucleotide-binding</keyword>
<keyword id="KW-0648">Protein biosynthesis</keyword>
<keyword id="KW-1185">Reference proteome</keyword>
<sequence>MTEFSSFSAPKGVPDYVPPDSAQFVAVRDGLLAAARQAGYSHIELPIFEDTALFARGVGESTDVVSKEMYTFADRGDRSVTLRPEGTAGVVRAVIEHGLDRGALPVKLCYAGPFFRYERPQAGRYRQLQQVGVEAIGVDDPALDAEVIAIADAGFRSLGLDGFRLEITSLGDESCRPQYRELLQEFLFGLDLDEDTRRRAGINPLRVLDDKRPELRAMTASAPVLLDHLSDVAKQHFDTVLAHLDALGVPYVINPRMVRGLDYYTKTAFEFVHDGLGAQSGIGGGGRYDGLMHQLGGQDLSGIGFGLGVDRTVLALRAEGKTAGDSARCDVFGVPLGEAAKLRLAVLAGRLRAAGVRVDLAYGDRGLKGAMRAAARSGARVALVAGDRDIEAGTVAVKDLTTGEQVSVSMDSVVAEVISRLAG</sequence>
<comment type="catalytic activity">
    <reaction>
        <text>tRNA(His) + L-histidine + ATP = L-histidyl-tRNA(His) + AMP + diphosphate + H(+)</text>
        <dbReference type="Rhea" id="RHEA:17313"/>
        <dbReference type="Rhea" id="RHEA-COMP:9665"/>
        <dbReference type="Rhea" id="RHEA-COMP:9689"/>
        <dbReference type="ChEBI" id="CHEBI:15378"/>
        <dbReference type="ChEBI" id="CHEBI:30616"/>
        <dbReference type="ChEBI" id="CHEBI:33019"/>
        <dbReference type="ChEBI" id="CHEBI:57595"/>
        <dbReference type="ChEBI" id="CHEBI:78442"/>
        <dbReference type="ChEBI" id="CHEBI:78527"/>
        <dbReference type="ChEBI" id="CHEBI:456215"/>
        <dbReference type="EC" id="6.1.1.21"/>
    </reaction>
</comment>
<comment type="subunit">
    <text evidence="1">Homodimer.</text>
</comment>
<comment type="subcellular location">
    <subcellularLocation>
        <location evidence="1">Cytoplasm</location>
    </subcellularLocation>
</comment>
<comment type="similarity">
    <text evidence="2">Belongs to the class-II aminoacyl-tRNA synthetase family.</text>
</comment>
<protein>
    <recommendedName>
        <fullName>Histidine--tRNA ligase</fullName>
        <ecNumber>6.1.1.21</ecNumber>
    </recommendedName>
    <alternativeName>
        <fullName>Histidyl-tRNA synthetase</fullName>
        <shortName>HisRS</shortName>
    </alternativeName>
</protein>
<reference key="1">
    <citation type="journal article" date="1998" name="Nature">
        <title>Deciphering the biology of Mycobacterium tuberculosis from the complete genome sequence.</title>
        <authorList>
            <person name="Cole S.T."/>
            <person name="Brosch R."/>
            <person name="Parkhill J."/>
            <person name="Garnier T."/>
            <person name="Churcher C.M."/>
            <person name="Harris D.E."/>
            <person name="Gordon S.V."/>
            <person name="Eiglmeier K."/>
            <person name="Gas S."/>
            <person name="Barry C.E. III"/>
            <person name="Tekaia F."/>
            <person name="Badcock K."/>
            <person name="Basham D."/>
            <person name="Brown D."/>
            <person name="Chillingworth T."/>
            <person name="Connor R."/>
            <person name="Davies R.M."/>
            <person name="Devlin K."/>
            <person name="Feltwell T."/>
            <person name="Gentles S."/>
            <person name="Hamlin N."/>
            <person name="Holroyd S."/>
            <person name="Hornsby T."/>
            <person name="Jagels K."/>
            <person name="Krogh A."/>
            <person name="McLean J."/>
            <person name="Moule S."/>
            <person name="Murphy L.D."/>
            <person name="Oliver S."/>
            <person name="Osborne J."/>
            <person name="Quail M.A."/>
            <person name="Rajandream M.A."/>
            <person name="Rogers J."/>
            <person name="Rutter S."/>
            <person name="Seeger K."/>
            <person name="Skelton S."/>
            <person name="Squares S."/>
            <person name="Squares R."/>
            <person name="Sulston J.E."/>
            <person name="Taylor K."/>
            <person name="Whitehead S."/>
            <person name="Barrell B.G."/>
        </authorList>
    </citation>
    <scope>NUCLEOTIDE SEQUENCE [LARGE SCALE GENOMIC DNA]</scope>
    <source>
        <strain>ATCC 25618 / H37Rv</strain>
    </source>
</reference>
<reference key="2">
    <citation type="journal article" date="2011" name="Mol. Cell. Proteomics">
        <title>Proteogenomic analysis of Mycobacterium tuberculosis by high resolution mass spectrometry.</title>
        <authorList>
            <person name="Kelkar D.S."/>
            <person name="Kumar D."/>
            <person name="Kumar P."/>
            <person name="Balakrishnan L."/>
            <person name="Muthusamy B."/>
            <person name="Yadav A.K."/>
            <person name="Shrivastava P."/>
            <person name="Marimuthu A."/>
            <person name="Anand S."/>
            <person name="Sundaram H."/>
            <person name="Kingsbury R."/>
            <person name="Harsha H.C."/>
            <person name="Nair B."/>
            <person name="Prasad T.S."/>
            <person name="Chauhan D.S."/>
            <person name="Katoch K."/>
            <person name="Katoch V.M."/>
            <person name="Kumar P."/>
            <person name="Chaerkady R."/>
            <person name="Ramachandran S."/>
            <person name="Dash D."/>
            <person name="Pandey A."/>
        </authorList>
    </citation>
    <scope>IDENTIFICATION BY MASS SPECTROMETRY [LARGE SCALE ANALYSIS]</scope>
    <source>
        <strain>ATCC 25618 / H37Rv</strain>
    </source>
</reference>
<dbReference type="EC" id="6.1.1.21"/>
<dbReference type="EMBL" id="AL123456">
    <property type="protein sequence ID" value="CCP45376.1"/>
    <property type="molecule type" value="Genomic_DNA"/>
</dbReference>
<dbReference type="PIR" id="C70725">
    <property type="entry name" value="C70725"/>
</dbReference>
<dbReference type="RefSeq" id="NP_217096.1">
    <property type="nucleotide sequence ID" value="NC_000962.3"/>
</dbReference>
<dbReference type="RefSeq" id="WP_003413365.1">
    <property type="nucleotide sequence ID" value="NZ_NVQJ01000023.1"/>
</dbReference>
<dbReference type="SMR" id="P9WFV5"/>
<dbReference type="FunCoup" id="P9WFV5">
    <property type="interactions" value="465"/>
</dbReference>
<dbReference type="STRING" id="83332.Rv2580c"/>
<dbReference type="PaxDb" id="83332-Rv2580c"/>
<dbReference type="DNASU" id="887479"/>
<dbReference type="GeneID" id="45426582"/>
<dbReference type="GeneID" id="887479"/>
<dbReference type="KEGG" id="mtu:Rv2580c"/>
<dbReference type="KEGG" id="mtv:RVBD_2580c"/>
<dbReference type="PATRIC" id="fig|83332.111.peg.2883"/>
<dbReference type="TubercuList" id="Rv2580c"/>
<dbReference type="eggNOG" id="COG0124">
    <property type="taxonomic scope" value="Bacteria"/>
</dbReference>
<dbReference type="InParanoid" id="P9WFV5"/>
<dbReference type="OrthoDB" id="9800814at2"/>
<dbReference type="PhylomeDB" id="P9WFV5"/>
<dbReference type="BRENDA" id="6.1.1.21">
    <property type="organism ID" value="3445"/>
</dbReference>
<dbReference type="Proteomes" id="UP000001584">
    <property type="component" value="Chromosome"/>
</dbReference>
<dbReference type="GO" id="GO:0005737">
    <property type="term" value="C:cytoplasm"/>
    <property type="evidence" value="ECO:0007669"/>
    <property type="project" value="UniProtKB-SubCell"/>
</dbReference>
<dbReference type="GO" id="GO:0009274">
    <property type="term" value="C:peptidoglycan-based cell wall"/>
    <property type="evidence" value="ECO:0007005"/>
    <property type="project" value="MTBBASE"/>
</dbReference>
<dbReference type="GO" id="GO:0005886">
    <property type="term" value="C:plasma membrane"/>
    <property type="evidence" value="ECO:0007005"/>
    <property type="project" value="MTBBASE"/>
</dbReference>
<dbReference type="GO" id="GO:0005524">
    <property type="term" value="F:ATP binding"/>
    <property type="evidence" value="ECO:0007669"/>
    <property type="project" value="UniProtKB-UniRule"/>
</dbReference>
<dbReference type="GO" id="GO:0004821">
    <property type="term" value="F:histidine-tRNA ligase activity"/>
    <property type="evidence" value="ECO:0000318"/>
    <property type="project" value="GO_Central"/>
</dbReference>
<dbReference type="GO" id="GO:0006427">
    <property type="term" value="P:histidyl-tRNA aminoacylation"/>
    <property type="evidence" value="ECO:0000318"/>
    <property type="project" value="GO_Central"/>
</dbReference>
<dbReference type="CDD" id="cd00773">
    <property type="entry name" value="HisRS-like_core"/>
    <property type="match status" value="1"/>
</dbReference>
<dbReference type="CDD" id="cd00859">
    <property type="entry name" value="HisRS_anticodon"/>
    <property type="match status" value="1"/>
</dbReference>
<dbReference type="FunFam" id="3.30.930.10:FF:000005">
    <property type="entry name" value="Histidine--tRNA ligase"/>
    <property type="match status" value="1"/>
</dbReference>
<dbReference type="Gene3D" id="3.40.50.800">
    <property type="entry name" value="Anticodon-binding domain"/>
    <property type="match status" value="1"/>
</dbReference>
<dbReference type="Gene3D" id="3.30.930.10">
    <property type="entry name" value="Bira Bifunctional Protein, Domain 2"/>
    <property type="match status" value="1"/>
</dbReference>
<dbReference type="HAMAP" id="MF_00127">
    <property type="entry name" value="His_tRNA_synth"/>
    <property type="match status" value="1"/>
</dbReference>
<dbReference type="InterPro" id="IPR006195">
    <property type="entry name" value="aa-tRNA-synth_II"/>
</dbReference>
<dbReference type="InterPro" id="IPR045864">
    <property type="entry name" value="aa-tRNA-synth_II/BPL/LPL"/>
</dbReference>
<dbReference type="InterPro" id="IPR004154">
    <property type="entry name" value="Anticodon-bd"/>
</dbReference>
<dbReference type="InterPro" id="IPR036621">
    <property type="entry name" value="Anticodon-bd_dom_sf"/>
</dbReference>
<dbReference type="InterPro" id="IPR015807">
    <property type="entry name" value="His-tRNA-ligase"/>
</dbReference>
<dbReference type="InterPro" id="IPR041715">
    <property type="entry name" value="HisRS-like_core"/>
</dbReference>
<dbReference type="InterPro" id="IPR004516">
    <property type="entry name" value="HisRS/HisZ"/>
</dbReference>
<dbReference type="InterPro" id="IPR033656">
    <property type="entry name" value="HisRS_anticodon"/>
</dbReference>
<dbReference type="NCBIfam" id="TIGR00442">
    <property type="entry name" value="hisS"/>
    <property type="match status" value="1"/>
</dbReference>
<dbReference type="PANTHER" id="PTHR43707:SF1">
    <property type="entry name" value="HISTIDINE--TRNA LIGASE, MITOCHONDRIAL-RELATED"/>
    <property type="match status" value="1"/>
</dbReference>
<dbReference type="PANTHER" id="PTHR43707">
    <property type="entry name" value="HISTIDYL-TRNA SYNTHETASE"/>
    <property type="match status" value="1"/>
</dbReference>
<dbReference type="Pfam" id="PF03129">
    <property type="entry name" value="HGTP_anticodon"/>
    <property type="match status" value="1"/>
</dbReference>
<dbReference type="Pfam" id="PF13393">
    <property type="entry name" value="tRNA-synt_His"/>
    <property type="match status" value="1"/>
</dbReference>
<dbReference type="PIRSF" id="PIRSF001549">
    <property type="entry name" value="His-tRNA_synth"/>
    <property type="match status" value="1"/>
</dbReference>
<dbReference type="SUPFAM" id="SSF52954">
    <property type="entry name" value="Class II aaRS ABD-related"/>
    <property type="match status" value="1"/>
</dbReference>
<dbReference type="SUPFAM" id="SSF55681">
    <property type="entry name" value="Class II aaRS and biotin synthetases"/>
    <property type="match status" value="1"/>
</dbReference>
<dbReference type="PROSITE" id="PS50862">
    <property type="entry name" value="AA_TRNA_LIGASE_II"/>
    <property type="match status" value="1"/>
</dbReference>
<accession>P9WFV5</accession>
<accession>L0TAA4</accession>
<accession>P67483</accession>
<accession>Q50641</accession>
<feature type="chain" id="PRO_0000136196" description="Histidine--tRNA ligase">
    <location>
        <begin position="1"/>
        <end position="423"/>
    </location>
</feature>
<proteinExistence type="evidence at protein level"/>
<organism>
    <name type="scientific">Mycobacterium tuberculosis (strain ATCC 25618 / H37Rv)</name>
    <dbReference type="NCBI Taxonomy" id="83332"/>
    <lineage>
        <taxon>Bacteria</taxon>
        <taxon>Bacillati</taxon>
        <taxon>Actinomycetota</taxon>
        <taxon>Actinomycetes</taxon>
        <taxon>Mycobacteriales</taxon>
        <taxon>Mycobacteriaceae</taxon>
        <taxon>Mycobacterium</taxon>
        <taxon>Mycobacterium tuberculosis complex</taxon>
    </lineage>
</organism>
<evidence type="ECO:0000250" key="1"/>
<evidence type="ECO:0000305" key="2"/>
<gene>
    <name type="primary">hisS</name>
    <name type="ordered locus">Rv2580c</name>
    <name type="ORF">MTCY227.21</name>
</gene>
<name>SYH_MYCTU</name>